<keyword id="KW-0687">Ribonucleoprotein</keyword>
<keyword id="KW-0689">Ribosomal protein</keyword>
<keyword id="KW-0694">RNA-binding</keyword>
<keyword id="KW-0699">rRNA-binding</keyword>
<gene>
    <name evidence="1" type="primary">rpsT</name>
    <name type="ordered locus">YPN_0345</name>
    <name type="ORF">YP516_0352</name>
</gene>
<organism>
    <name type="scientific">Yersinia pestis bv. Antiqua (strain Nepal516)</name>
    <dbReference type="NCBI Taxonomy" id="377628"/>
    <lineage>
        <taxon>Bacteria</taxon>
        <taxon>Pseudomonadati</taxon>
        <taxon>Pseudomonadota</taxon>
        <taxon>Gammaproteobacteria</taxon>
        <taxon>Enterobacterales</taxon>
        <taxon>Yersiniaceae</taxon>
        <taxon>Yersinia</taxon>
    </lineage>
</organism>
<comment type="function">
    <text evidence="1">Binds directly to 16S ribosomal RNA.</text>
</comment>
<comment type="similarity">
    <text evidence="1">Belongs to the bacterial ribosomal protein bS20 family.</text>
</comment>
<sequence>MANIKSAKKRAVQSEKRRKHNASRRSMVRTFIKKVYAAIAAGDKDAAQKAFNEMQPIVDRQSCKGLIHKNKAARHKSNLVAQINAMQ</sequence>
<reference key="1">
    <citation type="journal article" date="2006" name="J. Bacteriol.">
        <title>Complete genome sequence of Yersinia pestis strains Antiqua and Nepal516: evidence of gene reduction in an emerging pathogen.</title>
        <authorList>
            <person name="Chain P.S.G."/>
            <person name="Hu P."/>
            <person name="Malfatti S.A."/>
            <person name="Radnedge L."/>
            <person name="Larimer F."/>
            <person name="Vergez L.M."/>
            <person name="Worsham P."/>
            <person name="Chu M.C."/>
            <person name="Andersen G.L."/>
        </authorList>
    </citation>
    <scope>NUCLEOTIDE SEQUENCE [LARGE SCALE GENOMIC DNA]</scope>
    <source>
        <strain>Nepal516</strain>
    </source>
</reference>
<reference key="2">
    <citation type="submission" date="2009-04" db="EMBL/GenBank/DDBJ databases">
        <title>Yersinia pestis Nepal516A whole genome shotgun sequencing project.</title>
        <authorList>
            <person name="Plunkett G. III"/>
            <person name="Anderson B.D."/>
            <person name="Baumler D.J."/>
            <person name="Burland V."/>
            <person name="Cabot E.L."/>
            <person name="Glasner J.D."/>
            <person name="Mau B."/>
            <person name="Neeno-Eckwall E."/>
            <person name="Perna N.T."/>
            <person name="Munk A.C."/>
            <person name="Tapia R."/>
            <person name="Green L.D."/>
            <person name="Rogers Y.C."/>
            <person name="Detter J.C."/>
            <person name="Bruce D.C."/>
            <person name="Brettin T.S."/>
        </authorList>
    </citation>
    <scope>NUCLEOTIDE SEQUENCE [LARGE SCALE GENOMIC DNA]</scope>
    <source>
        <strain>Nepal516</strain>
    </source>
</reference>
<proteinExistence type="inferred from homology"/>
<feature type="chain" id="PRO_0000260151" description="Small ribosomal subunit protein bS20">
    <location>
        <begin position="1"/>
        <end position="87"/>
    </location>
</feature>
<feature type="region of interest" description="Disordered" evidence="2">
    <location>
        <begin position="1"/>
        <end position="25"/>
    </location>
</feature>
<accession>Q1CMV3</accession>
<accession>C4GNP8</accession>
<evidence type="ECO:0000255" key="1">
    <source>
        <dbReference type="HAMAP-Rule" id="MF_00500"/>
    </source>
</evidence>
<evidence type="ECO:0000256" key="2">
    <source>
        <dbReference type="SAM" id="MobiDB-lite"/>
    </source>
</evidence>
<evidence type="ECO:0000305" key="3"/>
<protein>
    <recommendedName>
        <fullName evidence="1">Small ribosomal subunit protein bS20</fullName>
    </recommendedName>
    <alternativeName>
        <fullName evidence="3">30S ribosomal protein S20</fullName>
    </alternativeName>
</protein>
<name>RS20_YERPN</name>
<dbReference type="EMBL" id="CP000305">
    <property type="protein sequence ID" value="ABG16677.1"/>
    <property type="molecule type" value="Genomic_DNA"/>
</dbReference>
<dbReference type="EMBL" id="ACNQ01000006">
    <property type="protein sequence ID" value="EEO78130.1"/>
    <property type="molecule type" value="Genomic_DNA"/>
</dbReference>
<dbReference type="RefSeq" id="WP_002220715.1">
    <property type="nucleotide sequence ID" value="NZ_ACNQ01000006.1"/>
</dbReference>
<dbReference type="SMR" id="Q1CMV3"/>
<dbReference type="GeneID" id="97457675"/>
<dbReference type="KEGG" id="ypn:YPN_0345"/>
<dbReference type="HOGENOM" id="CLU_160655_4_0_6"/>
<dbReference type="Proteomes" id="UP000008936">
    <property type="component" value="Chromosome"/>
</dbReference>
<dbReference type="GO" id="GO:0005829">
    <property type="term" value="C:cytosol"/>
    <property type="evidence" value="ECO:0007669"/>
    <property type="project" value="TreeGrafter"/>
</dbReference>
<dbReference type="GO" id="GO:0015935">
    <property type="term" value="C:small ribosomal subunit"/>
    <property type="evidence" value="ECO:0007669"/>
    <property type="project" value="TreeGrafter"/>
</dbReference>
<dbReference type="GO" id="GO:0070181">
    <property type="term" value="F:small ribosomal subunit rRNA binding"/>
    <property type="evidence" value="ECO:0007669"/>
    <property type="project" value="TreeGrafter"/>
</dbReference>
<dbReference type="GO" id="GO:0003735">
    <property type="term" value="F:structural constituent of ribosome"/>
    <property type="evidence" value="ECO:0007669"/>
    <property type="project" value="InterPro"/>
</dbReference>
<dbReference type="GO" id="GO:0006412">
    <property type="term" value="P:translation"/>
    <property type="evidence" value="ECO:0007669"/>
    <property type="project" value="UniProtKB-UniRule"/>
</dbReference>
<dbReference type="FunFam" id="1.20.58.110:FF:000001">
    <property type="entry name" value="30S ribosomal protein S20"/>
    <property type="match status" value="1"/>
</dbReference>
<dbReference type="Gene3D" id="1.20.58.110">
    <property type="entry name" value="Ribosomal protein S20"/>
    <property type="match status" value="1"/>
</dbReference>
<dbReference type="HAMAP" id="MF_00500">
    <property type="entry name" value="Ribosomal_bS20"/>
    <property type="match status" value="1"/>
</dbReference>
<dbReference type="InterPro" id="IPR002583">
    <property type="entry name" value="Ribosomal_bS20"/>
</dbReference>
<dbReference type="InterPro" id="IPR036510">
    <property type="entry name" value="Ribosomal_bS20_sf"/>
</dbReference>
<dbReference type="NCBIfam" id="TIGR00029">
    <property type="entry name" value="S20"/>
    <property type="match status" value="1"/>
</dbReference>
<dbReference type="PANTHER" id="PTHR33398">
    <property type="entry name" value="30S RIBOSOMAL PROTEIN S20"/>
    <property type="match status" value="1"/>
</dbReference>
<dbReference type="PANTHER" id="PTHR33398:SF1">
    <property type="entry name" value="SMALL RIBOSOMAL SUBUNIT PROTEIN BS20C"/>
    <property type="match status" value="1"/>
</dbReference>
<dbReference type="Pfam" id="PF01649">
    <property type="entry name" value="Ribosomal_S20p"/>
    <property type="match status" value="1"/>
</dbReference>
<dbReference type="SUPFAM" id="SSF46992">
    <property type="entry name" value="Ribosomal protein S20"/>
    <property type="match status" value="1"/>
</dbReference>